<name>TIP11_ORYSJ</name>
<organism>
    <name type="scientific">Oryza sativa subsp. japonica</name>
    <name type="common">Rice</name>
    <dbReference type="NCBI Taxonomy" id="39947"/>
    <lineage>
        <taxon>Eukaryota</taxon>
        <taxon>Viridiplantae</taxon>
        <taxon>Streptophyta</taxon>
        <taxon>Embryophyta</taxon>
        <taxon>Tracheophyta</taxon>
        <taxon>Spermatophyta</taxon>
        <taxon>Magnoliopsida</taxon>
        <taxon>Liliopsida</taxon>
        <taxon>Poales</taxon>
        <taxon>Poaceae</taxon>
        <taxon>BOP clade</taxon>
        <taxon>Oryzoideae</taxon>
        <taxon>Oryzeae</taxon>
        <taxon>Oryzinae</taxon>
        <taxon>Oryza</taxon>
        <taxon>Oryza sativa</taxon>
    </lineage>
</organism>
<sequence>MPIRNIAVGSHQEVYHPGALKAALAEFISTLIFVFAGQGSGMAFSKLTGGGATTPAGLIAAAVAHAFALFVAVSVGANISGGHVNPAVTFGAFVGGNITLFRGLLYWIAQLLGSTVACFLLRFSTGGLATGTFGLTGVSVWEALVLEIVMTFGLVYTVYATAVDPKKGSLGTIAPIAIGFIVGANILVGGAFDGASMNPAVSFGPALVSWSWESQWVYWVGPLIGGGLAGVIYEVLFISHTHEQLPTTDY</sequence>
<accession>P50156</accession>
<accession>Q10RT7</accession>
<accession>Q7G7J2</accession>
<comment type="function">
    <text evidence="1">Aquaporins facilitate the transport of water and small neutral solutes across cell membranes. May be involved in transport from the vacuolar compartment to the cytoplasm (By similarity).</text>
</comment>
<comment type="subcellular location">
    <subcellularLocation>
        <location evidence="1">Vacuole membrane</location>
        <topology evidence="1">Multi-pass membrane protein</topology>
    </subcellularLocation>
    <text>Tonoplast.</text>
</comment>
<comment type="alternative products">
    <event type="alternative splicing"/>
    <isoform>
        <id>P50156-1</id>
        <name>1</name>
        <sequence type="displayed"/>
    </isoform>
    <isoform>
        <id>P50156-2</id>
        <name>2</name>
        <sequence type="described" ref="VSP_039469"/>
    </isoform>
</comment>
<comment type="tissue specificity">
    <text evidence="3 4">Expressed in roots and leaves.</text>
</comment>
<comment type="induction">
    <text evidence="3 4">By osmotic stress and abscisic acid (ABA). Down-regulated by chilling.</text>
</comment>
<comment type="domain">
    <text>Aquaporins contain two tandem repeats each containing three membrane-spanning domains and a pore-forming loop with the signature motif Asn-Pro-Ala (NPA).</text>
</comment>
<comment type="similarity">
    <text evidence="6">Belongs to the MIP/aquaporin (TC 1.A.8) family. TIP (TC 1.A.8.10) subfamily.</text>
</comment>
<keyword id="KW-0025">Alternative splicing</keyword>
<keyword id="KW-0472">Membrane</keyword>
<keyword id="KW-1185">Reference proteome</keyword>
<keyword id="KW-0677">Repeat</keyword>
<keyword id="KW-0346">Stress response</keyword>
<keyword id="KW-0812">Transmembrane</keyword>
<keyword id="KW-1133">Transmembrane helix</keyword>
<keyword id="KW-0813">Transport</keyword>
<keyword id="KW-0926">Vacuole</keyword>
<proteinExistence type="evidence at transcript level"/>
<protein>
    <recommendedName>
        <fullName>Probable aquaporin TIP1-1</fullName>
    </recommendedName>
    <alternativeName>
        <fullName>Tonoplast intrinsic protein 1-1</fullName>
        <shortName>OsTIP1;1</shortName>
    </alternativeName>
    <alternativeName>
        <fullName>rTIP1</fullName>
    </alternativeName>
</protein>
<gene>
    <name type="primary">TIP1-1</name>
    <name type="synonym">YK333</name>
    <name type="ordered locus">Os03g0146100</name>
    <name type="ordered locus">LOC_Os03g05290</name>
    <name type="ORF">OsJ_009057</name>
    <name type="ORF">OSJNBa0067N01.16</name>
</gene>
<evidence type="ECO:0000250" key="1"/>
<evidence type="ECO:0000255" key="2"/>
<evidence type="ECO:0000269" key="3">
    <source>
    </source>
</evidence>
<evidence type="ECO:0000269" key="4">
    <source>
    </source>
</evidence>
<evidence type="ECO:0000303" key="5">
    <source>
    </source>
</evidence>
<evidence type="ECO:0000305" key="6"/>
<dbReference type="EMBL" id="D25534">
    <property type="protein sequence ID" value="BAA05017.1"/>
    <property type="molecule type" value="mRNA"/>
</dbReference>
<dbReference type="EMBL" id="AC090485">
    <property type="protein sequence ID" value="AAK98737.1"/>
    <property type="molecule type" value="Genomic_DNA"/>
</dbReference>
<dbReference type="EMBL" id="DP000009">
    <property type="protein sequence ID" value="ABF93961.1"/>
    <property type="molecule type" value="Genomic_DNA"/>
</dbReference>
<dbReference type="EMBL" id="AP008209">
    <property type="protein sequence ID" value="BAF10870.2"/>
    <property type="molecule type" value="Genomic_DNA"/>
</dbReference>
<dbReference type="EMBL" id="AP014959">
    <property type="protein sequence ID" value="BAS82275.1"/>
    <property type="molecule type" value="Genomic_DNA"/>
</dbReference>
<dbReference type="EMBL" id="AP014959">
    <property type="protein sequence ID" value="BAS82276.1"/>
    <property type="molecule type" value="Genomic_DNA"/>
</dbReference>
<dbReference type="EMBL" id="CM000140">
    <property type="protein sequence ID" value="EAZ25574.1"/>
    <property type="molecule type" value="Genomic_DNA"/>
</dbReference>
<dbReference type="EMBL" id="AK058322">
    <property type="status" value="NOT_ANNOTATED_CDS"/>
    <property type="molecule type" value="mRNA"/>
</dbReference>
<dbReference type="EMBL" id="AK060994">
    <property type="status" value="NOT_ANNOTATED_CDS"/>
    <property type="molecule type" value="mRNA"/>
</dbReference>
<dbReference type="PIR" id="S52004">
    <property type="entry name" value="S52004"/>
</dbReference>
<dbReference type="RefSeq" id="XP_015631095.1">
    <property type="nucleotide sequence ID" value="XM_015775609.1"/>
</dbReference>
<dbReference type="SMR" id="P50156"/>
<dbReference type="FunCoup" id="P50156">
    <property type="interactions" value="635"/>
</dbReference>
<dbReference type="STRING" id="39947.P50156"/>
<dbReference type="PaxDb" id="39947-P50156"/>
<dbReference type="EnsemblPlants" id="Os03t0146100-01">
    <molecule id="P50156-1"/>
    <property type="protein sequence ID" value="Os03t0146100-01"/>
    <property type="gene ID" value="Os03g0146100"/>
</dbReference>
<dbReference type="Gramene" id="Os03t0146100-01">
    <molecule id="P50156-1"/>
    <property type="protein sequence ID" value="Os03t0146100-01"/>
    <property type="gene ID" value="Os03g0146100"/>
</dbReference>
<dbReference type="KEGG" id="dosa:Os03g0146100"/>
<dbReference type="eggNOG" id="KOG0223">
    <property type="taxonomic scope" value="Eukaryota"/>
</dbReference>
<dbReference type="HOGENOM" id="CLU_020019_3_4_1"/>
<dbReference type="InParanoid" id="P50156"/>
<dbReference type="OMA" id="TECLAVF"/>
<dbReference type="OrthoDB" id="3222at2759"/>
<dbReference type="Proteomes" id="UP000000763">
    <property type="component" value="Chromosome 3"/>
</dbReference>
<dbReference type="Proteomes" id="UP000007752">
    <property type="component" value="Chromosome 3"/>
</dbReference>
<dbReference type="Proteomes" id="UP000059680">
    <property type="component" value="Chromosome 3"/>
</dbReference>
<dbReference type="ExpressionAtlas" id="P50156">
    <property type="expression patterns" value="baseline and differential"/>
</dbReference>
<dbReference type="GO" id="GO:0009705">
    <property type="term" value="C:plant-type vacuole membrane"/>
    <property type="evidence" value="ECO:0000318"/>
    <property type="project" value="GO_Central"/>
</dbReference>
<dbReference type="GO" id="GO:0015250">
    <property type="term" value="F:water channel activity"/>
    <property type="evidence" value="ECO:0000318"/>
    <property type="project" value="GO_Central"/>
</dbReference>
<dbReference type="GO" id="GO:0006833">
    <property type="term" value="P:water transport"/>
    <property type="evidence" value="ECO:0000318"/>
    <property type="project" value="GO_Central"/>
</dbReference>
<dbReference type="CDD" id="cd00333">
    <property type="entry name" value="MIP"/>
    <property type="match status" value="1"/>
</dbReference>
<dbReference type="FunFam" id="1.20.1080.10:FF:000002">
    <property type="entry name" value="Probable aquaporin TIP1-1"/>
    <property type="match status" value="1"/>
</dbReference>
<dbReference type="Gene3D" id="1.20.1080.10">
    <property type="entry name" value="Glycerol uptake facilitator protein"/>
    <property type="match status" value="1"/>
</dbReference>
<dbReference type="InterPro" id="IPR023271">
    <property type="entry name" value="Aquaporin-like"/>
</dbReference>
<dbReference type="InterPro" id="IPR034294">
    <property type="entry name" value="Aquaporin_transptr"/>
</dbReference>
<dbReference type="InterPro" id="IPR000425">
    <property type="entry name" value="MIP"/>
</dbReference>
<dbReference type="InterPro" id="IPR022357">
    <property type="entry name" value="MIP_CS"/>
</dbReference>
<dbReference type="PANTHER" id="PTHR45665:SF54">
    <property type="entry name" value="AQUAPORIN TIP1-1"/>
    <property type="match status" value="1"/>
</dbReference>
<dbReference type="PANTHER" id="PTHR45665">
    <property type="entry name" value="AQUAPORIN-8"/>
    <property type="match status" value="1"/>
</dbReference>
<dbReference type="Pfam" id="PF00230">
    <property type="entry name" value="MIP"/>
    <property type="match status" value="1"/>
</dbReference>
<dbReference type="PRINTS" id="PR00783">
    <property type="entry name" value="MINTRINSICP"/>
</dbReference>
<dbReference type="SUPFAM" id="SSF81338">
    <property type="entry name" value="Aquaporin-like"/>
    <property type="match status" value="1"/>
</dbReference>
<dbReference type="PROSITE" id="PS00221">
    <property type="entry name" value="MIP"/>
    <property type="match status" value="1"/>
</dbReference>
<feature type="chain" id="PRO_0000064021" description="Probable aquaporin TIP1-1">
    <location>
        <begin position="1"/>
        <end position="250"/>
    </location>
</feature>
<feature type="transmembrane region" description="Helical; Name=1" evidence="2">
    <location>
        <begin position="25"/>
        <end position="44"/>
    </location>
</feature>
<feature type="transmembrane region" description="Helical; Name=2" evidence="2">
    <location>
        <begin position="58"/>
        <end position="77"/>
    </location>
</feature>
<feature type="transmembrane region" description="Helical; Name=3" evidence="2">
    <location>
        <begin position="103"/>
        <end position="121"/>
    </location>
</feature>
<feature type="transmembrane region" description="Helical; Name=4" evidence="2">
    <location>
        <begin position="144"/>
        <end position="163"/>
    </location>
</feature>
<feature type="transmembrane region" description="Helical; Name=5" evidence="2">
    <location>
        <begin position="170"/>
        <end position="192"/>
    </location>
</feature>
<feature type="transmembrane region" description="Helical; Name=6" evidence="2">
    <location>
        <begin position="216"/>
        <end position="233"/>
    </location>
</feature>
<feature type="short sequence motif" description="NPA 1">
    <location>
        <begin position="85"/>
        <end position="87"/>
    </location>
</feature>
<feature type="short sequence motif" description="NPA 2">
    <location>
        <begin position="198"/>
        <end position="200"/>
    </location>
</feature>
<feature type="splice variant" id="VSP_039469" description="In isoform 2." evidence="5">
    <location>
        <begin position="170"/>
        <end position="223"/>
    </location>
</feature>
<reference key="1">
    <citation type="journal article" date="1994" name="Plant Mol. Biol.">
        <title>Isolation and expression analysis of two rice genes encoding the major intrinsic protein.</title>
        <authorList>
            <person name="Liu Q."/>
            <person name="Umeda M."/>
            <person name="Uchimiya H."/>
        </authorList>
    </citation>
    <scope>NUCLEOTIDE SEQUENCE [MRNA] (ISOFORM 1)</scope>
    <scope>TISSUE SPECIFICITY</scope>
    <scope>INDUCTION</scope>
    <source>
        <tissue>Anther</tissue>
    </source>
</reference>
<reference key="2">
    <citation type="journal article" date="2005" name="Genome Res.">
        <title>Sequence, annotation, and analysis of synteny between rice chromosome 3 and diverged grass species.</title>
        <authorList>
            <consortium name="The rice chromosome 3 sequencing consortium"/>
            <person name="Buell C.R."/>
            <person name="Yuan Q."/>
            <person name="Ouyang S."/>
            <person name="Liu J."/>
            <person name="Zhu W."/>
            <person name="Wang A."/>
            <person name="Maiti R."/>
            <person name="Haas B."/>
            <person name="Wortman J."/>
            <person name="Pertea M."/>
            <person name="Jones K.M."/>
            <person name="Kim M."/>
            <person name="Overton L."/>
            <person name="Tsitrin T."/>
            <person name="Fadrosh D."/>
            <person name="Bera J."/>
            <person name="Weaver B."/>
            <person name="Jin S."/>
            <person name="Johri S."/>
            <person name="Reardon M."/>
            <person name="Webb K."/>
            <person name="Hill J."/>
            <person name="Moffat K."/>
            <person name="Tallon L."/>
            <person name="Van Aken S."/>
            <person name="Lewis M."/>
            <person name="Utterback T."/>
            <person name="Feldblyum T."/>
            <person name="Zismann V."/>
            <person name="Iobst S."/>
            <person name="Hsiao J."/>
            <person name="de Vazeille A.R."/>
            <person name="Salzberg S.L."/>
            <person name="White O."/>
            <person name="Fraser C.M."/>
            <person name="Yu Y."/>
            <person name="Kim H."/>
            <person name="Rambo T."/>
            <person name="Currie J."/>
            <person name="Collura K."/>
            <person name="Kernodle-Thompson S."/>
            <person name="Wei F."/>
            <person name="Kudrna K."/>
            <person name="Ammiraju J.S.S."/>
            <person name="Luo M."/>
            <person name="Goicoechea J.L."/>
            <person name="Wing R.A."/>
            <person name="Henry D."/>
            <person name="Oates R."/>
            <person name="Palmer M."/>
            <person name="Pries G."/>
            <person name="Saski C."/>
            <person name="Simmons J."/>
            <person name="Soderlund C."/>
            <person name="Nelson W."/>
            <person name="de la Bastide M."/>
            <person name="Spiegel L."/>
            <person name="Nascimento L."/>
            <person name="Huang E."/>
            <person name="Preston R."/>
            <person name="Zutavern T."/>
            <person name="Palmer L."/>
            <person name="O'Shaughnessy A."/>
            <person name="Dike S."/>
            <person name="McCombie W.R."/>
            <person name="Minx P."/>
            <person name="Cordum H."/>
            <person name="Wilson R."/>
            <person name="Jin W."/>
            <person name="Lee H.R."/>
            <person name="Jiang J."/>
            <person name="Jackson S."/>
        </authorList>
    </citation>
    <scope>NUCLEOTIDE SEQUENCE [LARGE SCALE GENOMIC DNA]</scope>
    <source>
        <strain>cv. Nipponbare</strain>
    </source>
</reference>
<reference key="3">
    <citation type="journal article" date="2005" name="Nature">
        <title>The map-based sequence of the rice genome.</title>
        <authorList>
            <consortium name="International rice genome sequencing project (IRGSP)"/>
        </authorList>
    </citation>
    <scope>NUCLEOTIDE SEQUENCE [LARGE SCALE GENOMIC DNA]</scope>
    <source>
        <strain>cv. Nipponbare</strain>
    </source>
</reference>
<reference key="4">
    <citation type="journal article" date="2008" name="Nucleic Acids Res.">
        <title>The rice annotation project database (RAP-DB): 2008 update.</title>
        <authorList>
            <consortium name="The rice annotation project (RAP)"/>
        </authorList>
    </citation>
    <scope>GENOME REANNOTATION</scope>
    <source>
        <strain>cv. Nipponbare</strain>
    </source>
</reference>
<reference key="5">
    <citation type="journal article" date="2013" name="Rice">
        <title>Improvement of the Oryza sativa Nipponbare reference genome using next generation sequence and optical map data.</title>
        <authorList>
            <person name="Kawahara Y."/>
            <person name="de la Bastide M."/>
            <person name="Hamilton J.P."/>
            <person name="Kanamori H."/>
            <person name="McCombie W.R."/>
            <person name="Ouyang S."/>
            <person name="Schwartz D.C."/>
            <person name="Tanaka T."/>
            <person name="Wu J."/>
            <person name="Zhou S."/>
            <person name="Childs K.L."/>
            <person name="Davidson R.M."/>
            <person name="Lin H."/>
            <person name="Quesada-Ocampo L."/>
            <person name="Vaillancourt B."/>
            <person name="Sakai H."/>
            <person name="Lee S.S."/>
            <person name="Kim J."/>
            <person name="Numa H."/>
            <person name="Itoh T."/>
            <person name="Buell C.R."/>
            <person name="Matsumoto T."/>
        </authorList>
    </citation>
    <scope>GENOME REANNOTATION</scope>
    <source>
        <strain>cv. Nipponbare</strain>
    </source>
</reference>
<reference key="6">
    <citation type="journal article" date="2005" name="PLoS Biol.">
        <title>The genomes of Oryza sativa: a history of duplications.</title>
        <authorList>
            <person name="Yu J."/>
            <person name="Wang J."/>
            <person name="Lin W."/>
            <person name="Li S."/>
            <person name="Li H."/>
            <person name="Zhou J."/>
            <person name="Ni P."/>
            <person name="Dong W."/>
            <person name="Hu S."/>
            <person name="Zeng C."/>
            <person name="Zhang J."/>
            <person name="Zhang Y."/>
            <person name="Li R."/>
            <person name="Xu Z."/>
            <person name="Li S."/>
            <person name="Li X."/>
            <person name="Zheng H."/>
            <person name="Cong L."/>
            <person name="Lin L."/>
            <person name="Yin J."/>
            <person name="Geng J."/>
            <person name="Li G."/>
            <person name="Shi J."/>
            <person name="Liu J."/>
            <person name="Lv H."/>
            <person name="Li J."/>
            <person name="Wang J."/>
            <person name="Deng Y."/>
            <person name="Ran L."/>
            <person name="Shi X."/>
            <person name="Wang X."/>
            <person name="Wu Q."/>
            <person name="Li C."/>
            <person name="Ren X."/>
            <person name="Wang J."/>
            <person name="Wang X."/>
            <person name="Li D."/>
            <person name="Liu D."/>
            <person name="Zhang X."/>
            <person name="Ji Z."/>
            <person name="Zhao W."/>
            <person name="Sun Y."/>
            <person name="Zhang Z."/>
            <person name="Bao J."/>
            <person name="Han Y."/>
            <person name="Dong L."/>
            <person name="Ji J."/>
            <person name="Chen P."/>
            <person name="Wu S."/>
            <person name="Liu J."/>
            <person name="Xiao Y."/>
            <person name="Bu D."/>
            <person name="Tan J."/>
            <person name="Yang L."/>
            <person name="Ye C."/>
            <person name="Zhang J."/>
            <person name="Xu J."/>
            <person name="Zhou Y."/>
            <person name="Yu Y."/>
            <person name="Zhang B."/>
            <person name="Zhuang S."/>
            <person name="Wei H."/>
            <person name="Liu B."/>
            <person name="Lei M."/>
            <person name="Yu H."/>
            <person name="Li Y."/>
            <person name="Xu H."/>
            <person name="Wei S."/>
            <person name="He X."/>
            <person name="Fang L."/>
            <person name="Zhang Z."/>
            <person name="Zhang Y."/>
            <person name="Huang X."/>
            <person name="Su Z."/>
            <person name="Tong W."/>
            <person name="Li J."/>
            <person name="Tong Z."/>
            <person name="Li S."/>
            <person name="Ye J."/>
            <person name="Wang L."/>
            <person name="Fang L."/>
            <person name="Lei T."/>
            <person name="Chen C.-S."/>
            <person name="Chen H.-C."/>
            <person name="Xu Z."/>
            <person name="Li H."/>
            <person name="Huang H."/>
            <person name="Zhang F."/>
            <person name="Xu H."/>
            <person name="Li N."/>
            <person name="Zhao C."/>
            <person name="Li S."/>
            <person name="Dong L."/>
            <person name="Huang Y."/>
            <person name="Li L."/>
            <person name="Xi Y."/>
            <person name="Qi Q."/>
            <person name="Li W."/>
            <person name="Zhang B."/>
            <person name="Hu W."/>
            <person name="Zhang Y."/>
            <person name="Tian X."/>
            <person name="Jiao Y."/>
            <person name="Liang X."/>
            <person name="Jin J."/>
            <person name="Gao L."/>
            <person name="Zheng W."/>
            <person name="Hao B."/>
            <person name="Liu S.-M."/>
            <person name="Wang W."/>
            <person name="Yuan L."/>
            <person name="Cao M."/>
            <person name="McDermott J."/>
            <person name="Samudrala R."/>
            <person name="Wang J."/>
            <person name="Wong G.K.-S."/>
            <person name="Yang H."/>
        </authorList>
    </citation>
    <scope>NUCLEOTIDE SEQUENCE [LARGE SCALE GENOMIC DNA]</scope>
    <source>
        <strain>cv. Nipponbare</strain>
    </source>
</reference>
<reference key="7">
    <citation type="journal article" date="2003" name="Science">
        <title>Collection, mapping, and annotation of over 28,000 cDNA clones from japonica rice.</title>
        <authorList>
            <consortium name="The rice full-length cDNA consortium"/>
        </authorList>
    </citation>
    <scope>NUCLEOTIDE SEQUENCE [LARGE SCALE MRNA] (ISOFORMS 1 AND 2)</scope>
    <source>
        <strain>cv. Nipponbare</strain>
    </source>
</reference>
<reference key="8">
    <citation type="journal article" date="2005" name="Plant Cell Physiol.">
        <title>Identification of 33 rice aquaporin genes and analysis of their expression and function.</title>
        <authorList>
            <person name="Sakurai J."/>
            <person name="Ishikawa F."/>
            <person name="Yamaguchi T."/>
            <person name="Uemura M."/>
            <person name="Maeshima M."/>
        </authorList>
    </citation>
    <scope>NOMENCLATURE</scope>
    <scope>TISSUE SPECIFICITY</scope>
    <scope>INDUCTION</scope>
</reference>